<keyword id="KW-0963">Cytoplasm</keyword>
<keyword id="KW-0489">Methyltransferase</keyword>
<keyword id="KW-0698">rRNA processing</keyword>
<keyword id="KW-0949">S-adenosyl-L-methionine</keyword>
<keyword id="KW-0808">Transferase</keyword>
<dbReference type="EC" id="2.1.1.177" evidence="1"/>
<dbReference type="EMBL" id="CP001175">
    <property type="protein sequence ID" value="ACK40672.1"/>
    <property type="molecule type" value="Genomic_DNA"/>
</dbReference>
<dbReference type="RefSeq" id="WP_012582035.1">
    <property type="nucleotide sequence ID" value="NC_011660.1"/>
</dbReference>
<dbReference type="SMR" id="B8DEV0"/>
<dbReference type="KEGG" id="lmh:LMHCC_2335"/>
<dbReference type="HOGENOM" id="CLU_100552_0_0_9"/>
<dbReference type="GO" id="GO:0005737">
    <property type="term" value="C:cytoplasm"/>
    <property type="evidence" value="ECO:0007669"/>
    <property type="project" value="UniProtKB-SubCell"/>
</dbReference>
<dbReference type="GO" id="GO:0070038">
    <property type="term" value="F:rRNA (pseudouridine-N3-)-methyltransferase activity"/>
    <property type="evidence" value="ECO:0007669"/>
    <property type="project" value="UniProtKB-UniRule"/>
</dbReference>
<dbReference type="CDD" id="cd18081">
    <property type="entry name" value="RlmH-like"/>
    <property type="match status" value="1"/>
</dbReference>
<dbReference type="Gene3D" id="3.40.1280.10">
    <property type="match status" value="1"/>
</dbReference>
<dbReference type="HAMAP" id="MF_00658">
    <property type="entry name" value="23SrRNA_methyltr_H"/>
    <property type="match status" value="1"/>
</dbReference>
<dbReference type="InterPro" id="IPR029028">
    <property type="entry name" value="Alpha/beta_knot_MTases"/>
</dbReference>
<dbReference type="InterPro" id="IPR003742">
    <property type="entry name" value="RlmH-like"/>
</dbReference>
<dbReference type="InterPro" id="IPR029026">
    <property type="entry name" value="tRNA_m1G_MTases_N"/>
</dbReference>
<dbReference type="NCBIfam" id="NF000985">
    <property type="entry name" value="PRK00103.1-3"/>
    <property type="match status" value="1"/>
</dbReference>
<dbReference type="NCBIfam" id="TIGR00246">
    <property type="entry name" value="tRNA_RlmH_YbeA"/>
    <property type="match status" value="1"/>
</dbReference>
<dbReference type="PANTHER" id="PTHR33603">
    <property type="entry name" value="METHYLTRANSFERASE"/>
    <property type="match status" value="1"/>
</dbReference>
<dbReference type="PANTHER" id="PTHR33603:SF1">
    <property type="entry name" value="RIBOSOMAL RNA LARGE SUBUNIT METHYLTRANSFERASE H"/>
    <property type="match status" value="1"/>
</dbReference>
<dbReference type="Pfam" id="PF02590">
    <property type="entry name" value="SPOUT_MTase"/>
    <property type="match status" value="1"/>
</dbReference>
<dbReference type="PIRSF" id="PIRSF004505">
    <property type="entry name" value="MT_bac"/>
    <property type="match status" value="1"/>
</dbReference>
<dbReference type="SUPFAM" id="SSF75217">
    <property type="entry name" value="alpha/beta knot"/>
    <property type="match status" value="1"/>
</dbReference>
<proteinExistence type="inferred from homology"/>
<comment type="function">
    <text evidence="1">Specifically methylates the pseudouridine at position 1915 (m3Psi1915) in 23S rRNA.</text>
</comment>
<comment type="catalytic activity">
    <reaction evidence="1">
        <text>pseudouridine(1915) in 23S rRNA + S-adenosyl-L-methionine = N(3)-methylpseudouridine(1915) in 23S rRNA + S-adenosyl-L-homocysteine + H(+)</text>
        <dbReference type="Rhea" id="RHEA:42752"/>
        <dbReference type="Rhea" id="RHEA-COMP:10221"/>
        <dbReference type="Rhea" id="RHEA-COMP:10222"/>
        <dbReference type="ChEBI" id="CHEBI:15378"/>
        <dbReference type="ChEBI" id="CHEBI:57856"/>
        <dbReference type="ChEBI" id="CHEBI:59789"/>
        <dbReference type="ChEBI" id="CHEBI:65314"/>
        <dbReference type="ChEBI" id="CHEBI:74486"/>
        <dbReference type="EC" id="2.1.1.177"/>
    </reaction>
</comment>
<comment type="subunit">
    <text evidence="1">Homodimer.</text>
</comment>
<comment type="subcellular location">
    <subcellularLocation>
        <location evidence="1">Cytoplasm</location>
    </subcellularLocation>
</comment>
<comment type="similarity">
    <text evidence="1">Belongs to the RNA methyltransferase RlmH family.</text>
</comment>
<reference key="1">
    <citation type="journal article" date="2011" name="J. Bacteriol.">
        <title>Genome sequence of lineage III Listeria monocytogenes strain HCC23.</title>
        <authorList>
            <person name="Steele C.L."/>
            <person name="Donaldson J.R."/>
            <person name="Paul D."/>
            <person name="Banes M.M."/>
            <person name="Arick T."/>
            <person name="Bridges S.M."/>
            <person name="Lawrence M.L."/>
        </authorList>
    </citation>
    <scope>NUCLEOTIDE SEQUENCE [LARGE SCALE GENOMIC DNA]</scope>
    <source>
        <strain>HCC23</strain>
    </source>
</reference>
<protein>
    <recommendedName>
        <fullName evidence="1">Ribosomal RNA large subunit methyltransferase H</fullName>
        <ecNumber evidence="1">2.1.1.177</ecNumber>
    </recommendedName>
    <alternativeName>
        <fullName evidence="1">23S rRNA (pseudouridine1915-N3)-methyltransferase</fullName>
    </alternativeName>
    <alternativeName>
        <fullName evidence="1">23S rRNA m3Psi1915 methyltransferase</fullName>
    </alternativeName>
    <alternativeName>
        <fullName evidence="1">rRNA (pseudouridine-N3-)-methyltransferase RlmH</fullName>
    </alternativeName>
</protein>
<evidence type="ECO:0000255" key="1">
    <source>
        <dbReference type="HAMAP-Rule" id="MF_00658"/>
    </source>
</evidence>
<name>RLMH_LISMH</name>
<accession>B8DEV0</accession>
<feature type="chain" id="PRO_1000199821" description="Ribosomal RNA large subunit methyltransferase H">
    <location>
        <begin position="1"/>
        <end position="159"/>
    </location>
</feature>
<feature type="binding site" evidence="1">
    <location>
        <position position="76"/>
    </location>
    <ligand>
        <name>S-adenosyl-L-methionine</name>
        <dbReference type="ChEBI" id="CHEBI:59789"/>
    </ligand>
</feature>
<feature type="binding site" evidence="1">
    <location>
        <position position="108"/>
    </location>
    <ligand>
        <name>S-adenosyl-L-methionine</name>
        <dbReference type="ChEBI" id="CHEBI:59789"/>
    </ligand>
</feature>
<feature type="binding site" evidence="1">
    <location>
        <begin position="127"/>
        <end position="132"/>
    </location>
    <ligand>
        <name>S-adenosyl-L-methionine</name>
        <dbReference type="ChEBI" id="CHEBI:59789"/>
    </ligand>
</feature>
<sequence length="159" mass="17711">MNIQIVTVGKLKEKYLVQGIAEYLKRLGAYAKVTIVEVPDEKAPEVLSDAEMKQVKDKEGARILAKIPDDAHVIALAIDGKMKSSEEFAADLDKLATYGKSKVTFVIGGSLGLSEAVLKRSNERISFGRLTLPHQLMRLVLVEQVYRAFRIVRGEPYHK</sequence>
<organism>
    <name type="scientific">Listeria monocytogenes serotype 4a (strain HCC23)</name>
    <dbReference type="NCBI Taxonomy" id="552536"/>
    <lineage>
        <taxon>Bacteria</taxon>
        <taxon>Bacillati</taxon>
        <taxon>Bacillota</taxon>
        <taxon>Bacilli</taxon>
        <taxon>Bacillales</taxon>
        <taxon>Listeriaceae</taxon>
        <taxon>Listeria</taxon>
    </lineage>
</organism>
<gene>
    <name evidence="1" type="primary">rlmH</name>
    <name type="ordered locus">LMHCC_2335</name>
</gene>